<keyword id="KW-0002">3D-structure</keyword>
<keyword id="KW-0067">ATP-binding</keyword>
<keyword id="KW-0173">Coenzyme A biosynthesis</keyword>
<keyword id="KW-0963">Cytoplasm</keyword>
<keyword id="KW-0418">Kinase</keyword>
<keyword id="KW-0547">Nucleotide-binding</keyword>
<keyword id="KW-1185">Reference proteome</keyword>
<keyword id="KW-0808">Transferase</keyword>
<gene>
    <name evidence="1" type="primary">coaA</name>
    <name type="ordered locus">CBU_0199</name>
</gene>
<proteinExistence type="evidence at protein level"/>
<evidence type="ECO:0000255" key="1">
    <source>
        <dbReference type="HAMAP-Rule" id="MF_00215"/>
    </source>
</evidence>
<evidence type="ECO:0007829" key="2">
    <source>
        <dbReference type="PDB" id="3TQC"/>
    </source>
</evidence>
<sequence>MTVKPELNEITPYLQFNRQQWGNFRKDTPLTLTESDLDKLQGQIEIVSLKEVTEIYLPLSRLLSFYVTARQTLQQATYQFLGKPEPKVPYIIGIAGSVAVGKSTTSRVLKALLSRWPDHPNVEVITTDGFLYSNAKLEKQGLMKRKGFPESYDMPSLLRVLNAIKSGQRNVRIPVYSHHYYDIVRGQYEIVDQPDIVILEGLNILQTGVRKTLQQLQVFVSDFFDFSLFVDAQAQVIQKWYIDRVLSFWRTTFKDPHSYFHYLTQMSETEVAAFAKHVWNEINKVNLMENILPYKNRAQLILEKAADHSIQKVYLRKI</sequence>
<feature type="chain" id="PRO_0000194425" description="Pantothenate kinase">
    <location>
        <begin position="1"/>
        <end position="318"/>
    </location>
</feature>
<feature type="binding site" evidence="1">
    <location>
        <begin position="96"/>
        <end position="103"/>
    </location>
    <ligand>
        <name>ATP</name>
        <dbReference type="ChEBI" id="CHEBI:30616"/>
    </ligand>
</feature>
<feature type="strand" evidence="2">
    <location>
        <begin position="12"/>
        <end position="17"/>
    </location>
</feature>
<feature type="helix" evidence="2">
    <location>
        <begin position="18"/>
        <end position="21"/>
    </location>
</feature>
<feature type="helix" evidence="2">
    <location>
        <begin position="34"/>
        <end position="39"/>
    </location>
</feature>
<feature type="turn" evidence="2">
    <location>
        <begin position="40"/>
        <end position="43"/>
    </location>
</feature>
<feature type="helix" evidence="2">
    <location>
        <begin position="44"/>
        <end position="47"/>
    </location>
</feature>
<feature type="helix" evidence="2">
    <location>
        <begin position="49"/>
        <end position="54"/>
    </location>
</feature>
<feature type="helix" evidence="2">
    <location>
        <begin position="56"/>
        <end position="81"/>
    </location>
</feature>
<feature type="strand" evidence="2">
    <location>
        <begin position="90"/>
        <end position="95"/>
    </location>
</feature>
<feature type="helix" evidence="2">
    <location>
        <begin position="102"/>
        <end position="113"/>
    </location>
</feature>
<feature type="strand" evidence="2">
    <location>
        <begin position="122"/>
        <end position="126"/>
    </location>
</feature>
<feature type="helix" evidence="2">
    <location>
        <begin position="127"/>
        <end position="130"/>
    </location>
</feature>
<feature type="helix" evidence="2">
    <location>
        <begin position="134"/>
        <end position="139"/>
    </location>
</feature>
<feature type="helix" evidence="2">
    <location>
        <begin position="143"/>
        <end position="145"/>
    </location>
</feature>
<feature type="helix" evidence="2">
    <location>
        <begin position="149"/>
        <end position="151"/>
    </location>
</feature>
<feature type="helix" evidence="2">
    <location>
        <begin position="154"/>
        <end position="165"/>
    </location>
</feature>
<feature type="strand" evidence="2">
    <location>
        <begin position="169"/>
        <end position="177"/>
    </location>
</feature>
<feature type="turn" evidence="2">
    <location>
        <begin position="178"/>
        <end position="181"/>
    </location>
</feature>
<feature type="strand" evidence="2">
    <location>
        <begin position="182"/>
        <end position="191"/>
    </location>
</feature>
<feature type="strand" evidence="2">
    <location>
        <begin position="195"/>
        <end position="200"/>
    </location>
</feature>
<feature type="turn" evidence="2">
    <location>
        <begin position="202"/>
        <end position="205"/>
    </location>
</feature>
<feature type="strand" evidence="2">
    <location>
        <begin position="211"/>
        <end position="215"/>
    </location>
</feature>
<feature type="helix" evidence="2">
    <location>
        <begin position="220"/>
        <end position="223"/>
    </location>
</feature>
<feature type="strand" evidence="2">
    <location>
        <begin position="225"/>
        <end position="231"/>
    </location>
</feature>
<feature type="helix" evidence="2">
    <location>
        <begin position="234"/>
        <end position="250"/>
    </location>
</feature>
<feature type="helix" evidence="2">
    <location>
        <begin position="252"/>
        <end position="254"/>
    </location>
</feature>
<feature type="helix" evidence="2">
    <location>
        <begin position="261"/>
        <end position="265"/>
    </location>
</feature>
<feature type="helix" evidence="2">
    <location>
        <begin position="268"/>
        <end position="281"/>
    </location>
</feature>
<feature type="helix" evidence="2">
    <location>
        <begin position="283"/>
        <end position="290"/>
    </location>
</feature>
<feature type="helix" evidence="2">
    <location>
        <begin position="292"/>
        <end position="297"/>
    </location>
</feature>
<feature type="strand" evidence="2">
    <location>
        <begin position="299"/>
        <end position="304"/>
    </location>
</feature>
<feature type="strand" evidence="2">
    <location>
        <begin position="310"/>
        <end position="316"/>
    </location>
</feature>
<name>COAA_COXBU</name>
<organism>
    <name type="scientific">Coxiella burnetii (strain RSA 493 / Nine Mile phase I)</name>
    <dbReference type="NCBI Taxonomy" id="227377"/>
    <lineage>
        <taxon>Bacteria</taxon>
        <taxon>Pseudomonadati</taxon>
        <taxon>Pseudomonadota</taxon>
        <taxon>Gammaproteobacteria</taxon>
        <taxon>Legionellales</taxon>
        <taxon>Coxiellaceae</taxon>
        <taxon>Coxiella</taxon>
    </lineage>
</organism>
<comment type="catalytic activity">
    <reaction evidence="1">
        <text>(R)-pantothenate + ATP = (R)-4'-phosphopantothenate + ADP + H(+)</text>
        <dbReference type="Rhea" id="RHEA:16373"/>
        <dbReference type="ChEBI" id="CHEBI:10986"/>
        <dbReference type="ChEBI" id="CHEBI:15378"/>
        <dbReference type="ChEBI" id="CHEBI:29032"/>
        <dbReference type="ChEBI" id="CHEBI:30616"/>
        <dbReference type="ChEBI" id="CHEBI:456216"/>
        <dbReference type="EC" id="2.7.1.33"/>
    </reaction>
</comment>
<comment type="pathway">
    <text evidence="1">Cofactor biosynthesis; coenzyme A biosynthesis; CoA from (R)-pantothenate: step 1/5.</text>
</comment>
<comment type="subcellular location">
    <subcellularLocation>
        <location evidence="1">Cytoplasm</location>
    </subcellularLocation>
</comment>
<comment type="similarity">
    <text evidence="1">Belongs to the prokaryotic pantothenate kinase family.</text>
</comment>
<reference key="1">
    <citation type="journal article" date="2003" name="Proc. Natl. Acad. Sci. U.S.A.">
        <title>Complete genome sequence of the Q-fever pathogen, Coxiella burnetii.</title>
        <authorList>
            <person name="Seshadri R."/>
            <person name="Paulsen I.T."/>
            <person name="Eisen J.A."/>
            <person name="Read T.D."/>
            <person name="Nelson K.E."/>
            <person name="Nelson W.C."/>
            <person name="Ward N.L."/>
            <person name="Tettelin H."/>
            <person name="Davidsen T.M."/>
            <person name="Beanan M.J."/>
            <person name="DeBoy R.T."/>
            <person name="Daugherty S.C."/>
            <person name="Brinkac L.M."/>
            <person name="Madupu R."/>
            <person name="Dodson R.J."/>
            <person name="Khouri H.M."/>
            <person name="Lee K.H."/>
            <person name="Carty H.A."/>
            <person name="Scanlan D."/>
            <person name="Heinzen R.A."/>
            <person name="Thompson H.A."/>
            <person name="Samuel J.E."/>
            <person name="Fraser C.M."/>
            <person name="Heidelberg J.F."/>
        </authorList>
    </citation>
    <scope>NUCLEOTIDE SEQUENCE [LARGE SCALE GENOMIC DNA]</scope>
    <source>
        <strain>RSA 493 / Nine Mile phase I</strain>
    </source>
</reference>
<protein>
    <recommendedName>
        <fullName evidence="1">Pantothenate kinase</fullName>
        <ecNumber evidence="1">2.7.1.33</ecNumber>
    </recommendedName>
    <alternativeName>
        <fullName evidence="1">Pantothenic acid kinase</fullName>
    </alternativeName>
</protein>
<dbReference type="EC" id="2.7.1.33" evidence="1"/>
<dbReference type="EMBL" id="AE016828">
    <property type="protein sequence ID" value="AAO89759.1"/>
    <property type="molecule type" value="Genomic_DNA"/>
</dbReference>
<dbReference type="RefSeq" id="NP_819245.1">
    <property type="nucleotide sequence ID" value="NC_002971.4"/>
</dbReference>
<dbReference type="RefSeq" id="WP_010957432.1">
    <property type="nucleotide sequence ID" value="NC_002971.4"/>
</dbReference>
<dbReference type="PDB" id="3TQC">
    <property type="method" value="X-ray"/>
    <property type="resolution" value="2.30 A"/>
    <property type="chains" value="A/B=1-318"/>
</dbReference>
<dbReference type="PDBsum" id="3TQC"/>
<dbReference type="SMR" id="Q83EV9"/>
<dbReference type="STRING" id="227377.CBU_0199"/>
<dbReference type="DNASU" id="1208075"/>
<dbReference type="EnsemblBacteria" id="AAO89759">
    <property type="protein sequence ID" value="AAO89759"/>
    <property type="gene ID" value="CBU_0199"/>
</dbReference>
<dbReference type="GeneID" id="1208075"/>
<dbReference type="KEGG" id="cbu:CBU_0199"/>
<dbReference type="PATRIC" id="fig|227377.7.peg.197"/>
<dbReference type="eggNOG" id="COG1072">
    <property type="taxonomic scope" value="Bacteria"/>
</dbReference>
<dbReference type="HOGENOM" id="CLU_053818_1_1_6"/>
<dbReference type="OrthoDB" id="1550976at2"/>
<dbReference type="UniPathway" id="UPA00241">
    <property type="reaction ID" value="UER00352"/>
</dbReference>
<dbReference type="EvolutionaryTrace" id="Q83EV9"/>
<dbReference type="Proteomes" id="UP000002671">
    <property type="component" value="Chromosome"/>
</dbReference>
<dbReference type="GO" id="GO:0005737">
    <property type="term" value="C:cytoplasm"/>
    <property type="evidence" value="ECO:0000318"/>
    <property type="project" value="GO_Central"/>
</dbReference>
<dbReference type="GO" id="GO:0005524">
    <property type="term" value="F:ATP binding"/>
    <property type="evidence" value="ECO:0007669"/>
    <property type="project" value="UniProtKB-UniRule"/>
</dbReference>
<dbReference type="GO" id="GO:0004594">
    <property type="term" value="F:pantothenate kinase activity"/>
    <property type="evidence" value="ECO:0000318"/>
    <property type="project" value="GO_Central"/>
</dbReference>
<dbReference type="GO" id="GO:0015937">
    <property type="term" value="P:coenzyme A biosynthetic process"/>
    <property type="evidence" value="ECO:0000318"/>
    <property type="project" value="GO_Central"/>
</dbReference>
<dbReference type="CDD" id="cd02025">
    <property type="entry name" value="PanK"/>
    <property type="match status" value="1"/>
</dbReference>
<dbReference type="FunFam" id="3.40.50.300:FF:000242">
    <property type="entry name" value="Pantothenate kinase"/>
    <property type="match status" value="1"/>
</dbReference>
<dbReference type="Gene3D" id="3.40.50.300">
    <property type="entry name" value="P-loop containing nucleotide triphosphate hydrolases"/>
    <property type="match status" value="1"/>
</dbReference>
<dbReference type="HAMAP" id="MF_00215">
    <property type="entry name" value="Pantothen_kinase_1"/>
    <property type="match status" value="1"/>
</dbReference>
<dbReference type="InterPro" id="IPR027417">
    <property type="entry name" value="P-loop_NTPase"/>
</dbReference>
<dbReference type="InterPro" id="IPR004566">
    <property type="entry name" value="PanK"/>
</dbReference>
<dbReference type="InterPro" id="IPR006083">
    <property type="entry name" value="PRK/URK"/>
</dbReference>
<dbReference type="NCBIfam" id="TIGR00554">
    <property type="entry name" value="panK_bact"/>
    <property type="match status" value="1"/>
</dbReference>
<dbReference type="PANTHER" id="PTHR10285">
    <property type="entry name" value="URIDINE KINASE"/>
    <property type="match status" value="1"/>
</dbReference>
<dbReference type="Pfam" id="PF00485">
    <property type="entry name" value="PRK"/>
    <property type="match status" value="1"/>
</dbReference>
<dbReference type="PIRSF" id="PIRSF000545">
    <property type="entry name" value="Pantothenate_kin"/>
    <property type="match status" value="1"/>
</dbReference>
<dbReference type="SUPFAM" id="SSF52540">
    <property type="entry name" value="P-loop containing nucleoside triphosphate hydrolases"/>
    <property type="match status" value="1"/>
</dbReference>
<accession>Q83EV9</accession>